<reference key="1">
    <citation type="journal article" date="2005" name="Nucleic Acids Res.">
        <title>Genome dynamics and diversity of Shigella species, the etiologic agents of bacillary dysentery.</title>
        <authorList>
            <person name="Yang F."/>
            <person name="Yang J."/>
            <person name="Zhang X."/>
            <person name="Chen L."/>
            <person name="Jiang Y."/>
            <person name="Yan Y."/>
            <person name="Tang X."/>
            <person name="Wang J."/>
            <person name="Xiong Z."/>
            <person name="Dong J."/>
            <person name="Xue Y."/>
            <person name="Zhu Y."/>
            <person name="Xu X."/>
            <person name="Sun L."/>
            <person name="Chen S."/>
            <person name="Nie H."/>
            <person name="Peng J."/>
            <person name="Xu J."/>
            <person name="Wang Y."/>
            <person name="Yuan Z."/>
            <person name="Wen Y."/>
            <person name="Yao Z."/>
            <person name="Shen Y."/>
            <person name="Qiang B."/>
            <person name="Hou Y."/>
            <person name="Yu J."/>
            <person name="Jin Q."/>
        </authorList>
    </citation>
    <scope>NUCLEOTIDE SEQUENCE [LARGE SCALE GENOMIC DNA]</scope>
    <source>
        <strain>Sb227</strain>
    </source>
</reference>
<organism>
    <name type="scientific">Shigella boydii serotype 4 (strain Sb227)</name>
    <dbReference type="NCBI Taxonomy" id="300268"/>
    <lineage>
        <taxon>Bacteria</taxon>
        <taxon>Pseudomonadati</taxon>
        <taxon>Pseudomonadota</taxon>
        <taxon>Gammaproteobacteria</taxon>
        <taxon>Enterobacterales</taxon>
        <taxon>Enterobacteriaceae</taxon>
        <taxon>Shigella</taxon>
    </lineage>
</organism>
<comment type="function">
    <text evidence="1">Cell wall formation.</text>
</comment>
<comment type="catalytic activity">
    <reaction evidence="1">
        <text>UDP-N-acetyl-alpha-D-muramate + L-alanine + ATP = UDP-N-acetyl-alpha-D-muramoyl-L-alanine + ADP + phosphate + H(+)</text>
        <dbReference type="Rhea" id="RHEA:23372"/>
        <dbReference type="ChEBI" id="CHEBI:15378"/>
        <dbReference type="ChEBI" id="CHEBI:30616"/>
        <dbReference type="ChEBI" id="CHEBI:43474"/>
        <dbReference type="ChEBI" id="CHEBI:57972"/>
        <dbReference type="ChEBI" id="CHEBI:70757"/>
        <dbReference type="ChEBI" id="CHEBI:83898"/>
        <dbReference type="ChEBI" id="CHEBI:456216"/>
        <dbReference type="EC" id="6.3.2.8"/>
    </reaction>
</comment>
<comment type="pathway">
    <text evidence="1">Cell wall biogenesis; peptidoglycan biosynthesis.</text>
</comment>
<comment type="subcellular location">
    <subcellularLocation>
        <location evidence="1">Cytoplasm</location>
    </subcellularLocation>
</comment>
<comment type="similarity">
    <text evidence="1">Belongs to the MurCDEF family.</text>
</comment>
<dbReference type="EC" id="6.3.2.8" evidence="1"/>
<dbReference type="EMBL" id="CP000036">
    <property type="protein sequence ID" value="ABB64814.1"/>
    <property type="molecule type" value="Genomic_DNA"/>
</dbReference>
<dbReference type="RefSeq" id="WP_001096043.1">
    <property type="nucleotide sequence ID" value="NC_007613.1"/>
</dbReference>
<dbReference type="SMR" id="Q326E4"/>
<dbReference type="KEGG" id="sbo:SBO_0079"/>
<dbReference type="HOGENOM" id="CLU_028104_2_2_6"/>
<dbReference type="UniPathway" id="UPA00219"/>
<dbReference type="Proteomes" id="UP000007067">
    <property type="component" value="Chromosome"/>
</dbReference>
<dbReference type="GO" id="GO:0005737">
    <property type="term" value="C:cytoplasm"/>
    <property type="evidence" value="ECO:0007669"/>
    <property type="project" value="UniProtKB-SubCell"/>
</dbReference>
<dbReference type="GO" id="GO:0005524">
    <property type="term" value="F:ATP binding"/>
    <property type="evidence" value="ECO:0007669"/>
    <property type="project" value="UniProtKB-UniRule"/>
</dbReference>
<dbReference type="GO" id="GO:0008763">
    <property type="term" value="F:UDP-N-acetylmuramate-L-alanine ligase activity"/>
    <property type="evidence" value="ECO:0007669"/>
    <property type="project" value="UniProtKB-UniRule"/>
</dbReference>
<dbReference type="GO" id="GO:0051301">
    <property type="term" value="P:cell division"/>
    <property type="evidence" value="ECO:0007669"/>
    <property type="project" value="UniProtKB-KW"/>
</dbReference>
<dbReference type="GO" id="GO:0071555">
    <property type="term" value="P:cell wall organization"/>
    <property type="evidence" value="ECO:0007669"/>
    <property type="project" value="UniProtKB-KW"/>
</dbReference>
<dbReference type="GO" id="GO:0009252">
    <property type="term" value="P:peptidoglycan biosynthetic process"/>
    <property type="evidence" value="ECO:0007669"/>
    <property type="project" value="UniProtKB-UniRule"/>
</dbReference>
<dbReference type="GO" id="GO:0008360">
    <property type="term" value="P:regulation of cell shape"/>
    <property type="evidence" value="ECO:0007669"/>
    <property type="project" value="UniProtKB-KW"/>
</dbReference>
<dbReference type="FunFam" id="3.40.1190.10:FF:000001">
    <property type="entry name" value="UDP-N-acetylmuramate--L-alanine ligase"/>
    <property type="match status" value="1"/>
</dbReference>
<dbReference type="FunFam" id="3.40.50.720:FF:000046">
    <property type="entry name" value="UDP-N-acetylmuramate--L-alanine ligase"/>
    <property type="match status" value="1"/>
</dbReference>
<dbReference type="FunFam" id="3.90.190.20:FF:000001">
    <property type="entry name" value="UDP-N-acetylmuramate--L-alanine ligase"/>
    <property type="match status" value="1"/>
</dbReference>
<dbReference type="Gene3D" id="3.90.190.20">
    <property type="entry name" value="Mur ligase, C-terminal domain"/>
    <property type="match status" value="1"/>
</dbReference>
<dbReference type="Gene3D" id="3.40.1190.10">
    <property type="entry name" value="Mur-like, catalytic domain"/>
    <property type="match status" value="1"/>
</dbReference>
<dbReference type="Gene3D" id="3.40.50.720">
    <property type="entry name" value="NAD(P)-binding Rossmann-like Domain"/>
    <property type="match status" value="1"/>
</dbReference>
<dbReference type="HAMAP" id="MF_00046">
    <property type="entry name" value="MurC"/>
    <property type="match status" value="1"/>
</dbReference>
<dbReference type="InterPro" id="IPR036565">
    <property type="entry name" value="Mur-like_cat_sf"/>
</dbReference>
<dbReference type="InterPro" id="IPR004101">
    <property type="entry name" value="Mur_ligase_C"/>
</dbReference>
<dbReference type="InterPro" id="IPR036615">
    <property type="entry name" value="Mur_ligase_C_dom_sf"/>
</dbReference>
<dbReference type="InterPro" id="IPR013221">
    <property type="entry name" value="Mur_ligase_cen"/>
</dbReference>
<dbReference type="InterPro" id="IPR000713">
    <property type="entry name" value="Mur_ligase_N"/>
</dbReference>
<dbReference type="InterPro" id="IPR050061">
    <property type="entry name" value="MurCDEF_pg_biosynth"/>
</dbReference>
<dbReference type="InterPro" id="IPR005758">
    <property type="entry name" value="UDP-N-AcMur_Ala_ligase_MurC"/>
</dbReference>
<dbReference type="NCBIfam" id="TIGR01082">
    <property type="entry name" value="murC"/>
    <property type="match status" value="1"/>
</dbReference>
<dbReference type="PANTHER" id="PTHR43445:SF3">
    <property type="entry name" value="UDP-N-ACETYLMURAMATE--L-ALANINE LIGASE"/>
    <property type="match status" value="1"/>
</dbReference>
<dbReference type="PANTHER" id="PTHR43445">
    <property type="entry name" value="UDP-N-ACETYLMURAMATE--L-ALANINE LIGASE-RELATED"/>
    <property type="match status" value="1"/>
</dbReference>
<dbReference type="Pfam" id="PF01225">
    <property type="entry name" value="Mur_ligase"/>
    <property type="match status" value="1"/>
</dbReference>
<dbReference type="Pfam" id="PF02875">
    <property type="entry name" value="Mur_ligase_C"/>
    <property type="match status" value="1"/>
</dbReference>
<dbReference type="Pfam" id="PF08245">
    <property type="entry name" value="Mur_ligase_M"/>
    <property type="match status" value="1"/>
</dbReference>
<dbReference type="SUPFAM" id="SSF51984">
    <property type="entry name" value="MurCD N-terminal domain"/>
    <property type="match status" value="1"/>
</dbReference>
<dbReference type="SUPFAM" id="SSF53623">
    <property type="entry name" value="MurD-like peptide ligases, catalytic domain"/>
    <property type="match status" value="1"/>
</dbReference>
<dbReference type="SUPFAM" id="SSF53244">
    <property type="entry name" value="MurD-like peptide ligases, peptide-binding domain"/>
    <property type="match status" value="1"/>
</dbReference>
<evidence type="ECO:0000255" key="1">
    <source>
        <dbReference type="HAMAP-Rule" id="MF_00046"/>
    </source>
</evidence>
<name>MURC_SHIBS</name>
<gene>
    <name evidence="1" type="primary">murC</name>
    <name type="ordered locus">SBO_0079</name>
</gene>
<feature type="chain" id="PRO_0000242593" description="UDP-N-acetylmuramate--L-alanine ligase">
    <location>
        <begin position="1"/>
        <end position="491"/>
    </location>
</feature>
<feature type="binding site" evidence="1">
    <location>
        <begin position="126"/>
        <end position="132"/>
    </location>
    <ligand>
        <name>ATP</name>
        <dbReference type="ChEBI" id="CHEBI:30616"/>
    </ligand>
</feature>
<protein>
    <recommendedName>
        <fullName evidence="1">UDP-N-acetylmuramate--L-alanine ligase</fullName>
        <ecNumber evidence="1">6.3.2.8</ecNumber>
    </recommendedName>
    <alternativeName>
        <fullName evidence="1">UDP-N-acetylmuramoyl-L-alanine synthetase</fullName>
    </alternativeName>
</protein>
<proteinExistence type="inferred from homology"/>
<keyword id="KW-0067">ATP-binding</keyword>
<keyword id="KW-0131">Cell cycle</keyword>
<keyword id="KW-0132">Cell division</keyword>
<keyword id="KW-0133">Cell shape</keyword>
<keyword id="KW-0961">Cell wall biogenesis/degradation</keyword>
<keyword id="KW-0963">Cytoplasm</keyword>
<keyword id="KW-0436">Ligase</keyword>
<keyword id="KW-0547">Nucleotide-binding</keyword>
<keyword id="KW-0573">Peptidoglycan synthesis</keyword>
<accession>Q326E4</accession>
<sequence length="491" mass="53583">MNTQQLAKLRSIVPEMRRVRHIHFVGIGGAGMGGIAEVLANEGYQISGSDLAPNPVTQQLMNLGATIYFNHRPENVRDASVVVVSSAISADNPEIVAAHEARIPVIRRAEMLAELMRFRHGIAIAGTHGKTTTTAMVSSIYAEAGLDPTFVNGGLVKAAGVHARLGHGRYLIAEADESDASFLHLQPMVAIVTNIEADHMDTYQGDFENLKQTFINFLHNLPFYGRAVMCVDDPVIRELLPRVGRQTTTYGFSEDADVRVEDYQQIGPQGHFTLLRQDKEPMRVTLNAPGRHNALNAAAAVAVATEEGIDDEAILRALESFLGTGRRFDFLGEFPLEPVNGKSGTAMLVDDYGHHPTEVDATIKAARAGWPDKNLVMLFQPHRFTRTRDLYDDFANVLTQVDTLLMLEVYPAGEAPIPGADSRSLCRTIRGRGKIDPILVPDPAQVAEMLAPVLTGNDLILVQGAGNIGKIARSLAEIKLKPQTPEEEQHD</sequence>